<accession>A9ABD5</accession>
<keyword id="KW-0963">Cytoplasm</keyword>
<keyword id="KW-0342">GTP-binding</keyword>
<keyword id="KW-0396">Initiation factor</keyword>
<keyword id="KW-0547">Nucleotide-binding</keyword>
<keyword id="KW-0648">Protein biosynthesis</keyword>
<keyword id="KW-1185">Reference proteome</keyword>
<feature type="chain" id="PRO_1000093764" description="Translation initiation factor IF-2">
    <location>
        <begin position="1"/>
        <end position="969"/>
    </location>
</feature>
<feature type="domain" description="tr-type G">
    <location>
        <begin position="469"/>
        <end position="638"/>
    </location>
</feature>
<feature type="region of interest" description="Disordered" evidence="3">
    <location>
        <begin position="49"/>
        <end position="85"/>
    </location>
</feature>
<feature type="region of interest" description="Disordered" evidence="3">
    <location>
        <begin position="100"/>
        <end position="128"/>
    </location>
</feature>
<feature type="region of interest" description="Disordered" evidence="3">
    <location>
        <begin position="143"/>
        <end position="380"/>
    </location>
</feature>
<feature type="region of interest" description="G1" evidence="1">
    <location>
        <begin position="478"/>
        <end position="485"/>
    </location>
</feature>
<feature type="region of interest" description="G2" evidence="1">
    <location>
        <begin position="503"/>
        <end position="507"/>
    </location>
</feature>
<feature type="region of interest" description="G3" evidence="1">
    <location>
        <begin position="524"/>
        <end position="527"/>
    </location>
</feature>
<feature type="region of interest" description="G4" evidence="1">
    <location>
        <begin position="578"/>
        <end position="581"/>
    </location>
</feature>
<feature type="region of interest" description="G5" evidence="1">
    <location>
        <begin position="614"/>
        <end position="616"/>
    </location>
</feature>
<feature type="compositionally biased region" description="Basic and acidic residues" evidence="3">
    <location>
        <begin position="49"/>
        <end position="63"/>
    </location>
</feature>
<feature type="compositionally biased region" description="Low complexity" evidence="3">
    <location>
        <begin position="105"/>
        <end position="114"/>
    </location>
</feature>
<feature type="compositionally biased region" description="Basic and acidic residues" evidence="3">
    <location>
        <begin position="143"/>
        <end position="181"/>
    </location>
</feature>
<feature type="compositionally biased region" description="Low complexity" evidence="3">
    <location>
        <begin position="182"/>
        <end position="206"/>
    </location>
</feature>
<feature type="compositionally biased region" description="Basic and acidic residues" evidence="3">
    <location>
        <begin position="209"/>
        <end position="260"/>
    </location>
</feature>
<feature type="compositionally biased region" description="Low complexity" evidence="3">
    <location>
        <begin position="301"/>
        <end position="323"/>
    </location>
</feature>
<feature type="compositionally biased region" description="Gly residues" evidence="3">
    <location>
        <begin position="353"/>
        <end position="366"/>
    </location>
</feature>
<feature type="binding site" evidence="2">
    <location>
        <begin position="478"/>
        <end position="485"/>
    </location>
    <ligand>
        <name>GTP</name>
        <dbReference type="ChEBI" id="CHEBI:37565"/>
    </ligand>
</feature>
<feature type="binding site" evidence="2">
    <location>
        <begin position="524"/>
        <end position="528"/>
    </location>
    <ligand>
        <name>GTP</name>
        <dbReference type="ChEBI" id="CHEBI:37565"/>
    </ligand>
</feature>
<feature type="binding site" evidence="2">
    <location>
        <begin position="578"/>
        <end position="581"/>
    </location>
    <ligand>
        <name>GTP</name>
        <dbReference type="ChEBI" id="CHEBI:37565"/>
    </ligand>
</feature>
<organism>
    <name type="scientific">Burkholderia multivorans (strain ATCC 17616 / 249)</name>
    <dbReference type="NCBI Taxonomy" id="395019"/>
    <lineage>
        <taxon>Bacteria</taxon>
        <taxon>Pseudomonadati</taxon>
        <taxon>Pseudomonadota</taxon>
        <taxon>Betaproteobacteria</taxon>
        <taxon>Burkholderiales</taxon>
        <taxon>Burkholderiaceae</taxon>
        <taxon>Burkholderia</taxon>
        <taxon>Burkholderia cepacia complex</taxon>
    </lineage>
</organism>
<name>IF2_BURM1</name>
<evidence type="ECO:0000250" key="1"/>
<evidence type="ECO:0000255" key="2">
    <source>
        <dbReference type="HAMAP-Rule" id="MF_00100"/>
    </source>
</evidence>
<evidence type="ECO:0000256" key="3">
    <source>
        <dbReference type="SAM" id="MobiDB-lite"/>
    </source>
</evidence>
<gene>
    <name evidence="2" type="primary">infB</name>
    <name type="ordered locus">Bmul_1755</name>
    <name type="ordered locus">BMULJ_01485</name>
</gene>
<proteinExistence type="inferred from homology"/>
<comment type="function">
    <text evidence="2">One of the essential components for the initiation of protein synthesis. Protects formylmethionyl-tRNA from spontaneous hydrolysis and promotes its binding to the 30S ribosomal subunits. Also involved in the hydrolysis of GTP during the formation of the 70S ribosomal complex.</text>
</comment>
<comment type="subcellular location">
    <subcellularLocation>
        <location evidence="2">Cytoplasm</location>
    </subcellularLocation>
</comment>
<comment type="similarity">
    <text evidence="2">Belongs to the TRAFAC class translation factor GTPase superfamily. Classic translation factor GTPase family. IF-2 subfamily.</text>
</comment>
<protein>
    <recommendedName>
        <fullName evidence="2">Translation initiation factor IF-2</fullName>
    </recommendedName>
</protein>
<sequence length="969" mass="103900">MASNNVAQFAAELKMPAGVLLEQLQAAGVQKASEDDALSEADKARLLDHLRKSHGATDGDKRKITLTRKHTSEIKQSDATGKARTIQVEVRKKRTFVKRDDVSDVAEQGQAQVAEADDDAELKRREEEARREAALLEKQAQELRERQERLEREEAERRAREEAAEAERRRAEEEAAAKRAAAEAAAAQQAAQQAAAAQQAAAPADSAQDEARAAAERAAQREAAKKAEDAAREAAEKARAEQEEIRKRREAAEAEARAIREMMNTPRKAVVKAVEPPKPAEPAKPAEAKGTLHKPAKPEGAQARPAAKKPAAAPAATPAPAGAGDRNKKPGGGKGGWQDDAAKRRGIKTRGDSSGGVDRGWRGGPKGRGRHQDNASSFQAPTEPIVREVHVPETISVADLAHKMAIKASEVIKVMMKMGQMVTINQVLDQETAMIVVEELGHRALAAKLDDPEALLVEGETGSDAEQLPRPPVVTVMGHVDHGKTSLLDYIRRAKVAAGEAGGITQHIGAYHVETPRGVVTFLDTPGHEAFTAMRARGAKATDIVILVVAADDGVMPQTKEAISHAKAGGVPIVVAINKIDKPEANPDRVKQELVAEGVVPEEYGGDSPFVPVSAKTGAGIDDLLENVLLQAEVLELKAPVEAPAKGIVIEAKLDKGKGPVATMLVQSGTLSRGDIVLAGTAYGRVRAMLDENGKPTKEAGPSIPVEIQGLSEVPAAGEEVIVLPDERKAREIALFRQGKFRDVKLAKQQAAKLESMLEQMGEGEVQNLPLIIKADVQGSQEALVQSLLKLSTDEVRVQIVHSAVGGISESDVNLATASKAVIIGFNTRADAQARKLAEANGIDIRYYNIIYDAVDEVKAAMSGMLAPEKREVVTGMVEVRQVFKVPKVGTVAGCMVTDGIVKRSSSVRVLRNNVVIFTGELESLKRFKDDVKEVKQGFECGMSVKNFNDILEGDQFEVFEVTEVARTL</sequence>
<dbReference type="EMBL" id="CP000868">
    <property type="protein sequence ID" value="ABX15443.1"/>
    <property type="molecule type" value="Genomic_DNA"/>
</dbReference>
<dbReference type="EMBL" id="AP009385">
    <property type="protein sequence ID" value="BAG43414.1"/>
    <property type="molecule type" value="Genomic_DNA"/>
</dbReference>
<dbReference type="RefSeq" id="WP_006402062.1">
    <property type="nucleotide sequence ID" value="NC_010804.1"/>
</dbReference>
<dbReference type="SMR" id="A9ABD5"/>
<dbReference type="STRING" id="395019.BMULJ_01485"/>
<dbReference type="KEGG" id="bmj:BMULJ_01485"/>
<dbReference type="KEGG" id="bmu:Bmul_1755"/>
<dbReference type="eggNOG" id="COG0532">
    <property type="taxonomic scope" value="Bacteria"/>
</dbReference>
<dbReference type="HOGENOM" id="CLU_006301_6_0_4"/>
<dbReference type="Proteomes" id="UP000008815">
    <property type="component" value="Chromosome 1"/>
</dbReference>
<dbReference type="GO" id="GO:0005829">
    <property type="term" value="C:cytosol"/>
    <property type="evidence" value="ECO:0007669"/>
    <property type="project" value="TreeGrafter"/>
</dbReference>
<dbReference type="GO" id="GO:0005525">
    <property type="term" value="F:GTP binding"/>
    <property type="evidence" value="ECO:0007669"/>
    <property type="project" value="UniProtKB-KW"/>
</dbReference>
<dbReference type="GO" id="GO:0003924">
    <property type="term" value="F:GTPase activity"/>
    <property type="evidence" value="ECO:0007669"/>
    <property type="project" value="UniProtKB-UniRule"/>
</dbReference>
<dbReference type="GO" id="GO:0097216">
    <property type="term" value="F:guanosine tetraphosphate binding"/>
    <property type="evidence" value="ECO:0007669"/>
    <property type="project" value="UniProtKB-ARBA"/>
</dbReference>
<dbReference type="GO" id="GO:0003743">
    <property type="term" value="F:translation initiation factor activity"/>
    <property type="evidence" value="ECO:0007669"/>
    <property type="project" value="UniProtKB-UniRule"/>
</dbReference>
<dbReference type="CDD" id="cd01887">
    <property type="entry name" value="IF2_eIF5B"/>
    <property type="match status" value="1"/>
</dbReference>
<dbReference type="CDD" id="cd03702">
    <property type="entry name" value="IF2_mtIF2_II"/>
    <property type="match status" value="1"/>
</dbReference>
<dbReference type="CDD" id="cd03692">
    <property type="entry name" value="mtIF2_IVc"/>
    <property type="match status" value="1"/>
</dbReference>
<dbReference type="FunFam" id="2.40.30.10:FF:000007">
    <property type="entry name" value="Translation initiation factor IF-2"/>
    <property type="match status" value="1"/>
</dbReference>
<dbReference type="FunFam" id="2.40.30.10:FF:000008">
    <property type="entry name" value="Translation initiation factor IF-2"/>
    <property type="match status" value="1"/>
</dbReference>
<dbReference type="FunFam" id="3.40.50.10050:FF:000001">
    <property type="entry name" value="Translation initiation factor IF-2"/>
    <property type="match status" value="1"/>
</dbReference>
<dbReference type="FunFam" id="3.40.50.300:FF:000019">
    <property type="entry name" value="Translation initiation factor IF-2"/>
    <property type="match status" value="1"/>
</dbReference>
<dbReference type="Gene3D" id="3.40.50.300">
    <property type="entry name" value="P-loop containing nucleotide triphosphate hydrolases"/>
    <property type="match status" value="1"/>
</dbReference>
<dbReference type="Gene3D" id="3.30.56.50">
    <property type="entry name" value="Putative DNA-binding domain, N-terminal subdomain of bacterial translation initiation factor IF2"/>
    <property type="match status" value="1"/>
</dbReference>
<dbReference type="Gene3D" id="2.40.30.10">
    <property type="entry name" value="Translation factors"/>
    <property type="match status" value="2"/>
</dbReference>
<dbReference type="Gene3D" id="3.40.50.10050">
    <property type="entry name" value="Translation initiation factor IF- 2, domain 3"/>
    <property type="match status" value="1"/>
</dbReference>
<dbReference type="HAMAP" id="MF_00100_B">
    <property type="entry name" value="IF_2_B"/>
    <property type="match status" value="1"/>
</dbReference>
<dbReference type="InterPro" id="IPR009061">
    <property type="entry name" value="DNA-bd_dom_put_sf"/>
</dbReference>
<dbReference type="InterPro" id="IPR053905">
    <property type="entry name" value="EF-G-like_DII"/>
</dbReference>
<dbReference type="InterPro" id="IPR004161">
    <property type="entry name" value="EFTu-like_2"/>
</dbReference>
<dbReference type="InterPro" id="IPR013575">
    <property type="entry name" value="IF2_assoc_dom_bac"/>
</dbReference>
<dbReference type="InterPro" id="IPR044145">
    <property type="entry name" value="IF2_II"/>
</dbReference>
<dbReference type="InterPro" id="IPR006847">
    <property type="entry name" value="IF2_N"/>
</dbReference>
<dbReference type="InterPro" id="IPR027417">
    <property type="entry name" value="P-loop_NTPase"/>
</dbReference>
<dbReference type="InterPro" id="IPR005225">
    <property type="entry name" value="Small_GTP-bd"/>
</dbReference>
<dbReference type="InterPro" id="IPR000795">
    <property type="entry name" value="T_Tr_GTP-bd_dom"/>
</dbReference>
<dbReference type="InterPro" id="IPR000178">
    <property type="entry name" value="TF_IF2_bacterial-like"/>
</dbReference>
<dbReference type="InterPro" id="IPR015760">
    <property type="entry name" value="TIF_IF2"/>
</dbReference>
<dbReference type="InterPro" id="IPR023115">
    <property type="entry name" value="TIF_IF2_dom3"/>
</dbReference>
<dbReference type="InterPro" id="IPR036925">
    <property type="entry name" value="TIF_IF2_dom3_sf"/>
</dbReference>
<dbReference type="InterPro" id="IPR009000">
    <property type="entry name" value="Transl_B-barrel_sf"/>
</dbReference>
<dbReference type="NCBIfam" id="TIGR00487">
    <property type="entry name" value="IF-2"/>
    <property type="match status" value="1"/>
</dbReference>
<dbReference type="NCBIfam" id="TIGR00231">
    <property type="entry name" value="small_GTP"/>
    <property type="match status" value="1"/>
</dbReference>
<dbReference type="PANTHER" id="PTHR43381:SF5">
    <property type="entry name" value="TR-TYPE G DOMAIN-CONTAINING PROTEIN"/>
    <property type="match status" value="1"/>
</dbReference>
<dbReference type="PANTHER" id="PTHR43381">
    <property type="entry name" value="TRANSLATION INITIATION FACTOR IF-2-RELATED"/>
    <property type="match status" value="1"/>
</dbReference>
<dbReference type="Pfam" id="PF22042">
    <property type="entry name" value="EF-G_D2"/>
    <property type="match status" value="1"/>
</dbReference>
<dbReference type="Pfam" id="PF00009">
    <property type="entry name" value="GTP_EFTU"/>
    <property type="match status" value="1"/>
</dbReference>
<dbReference type="Pfam" id="PF03144">
    <property type="entry name" value="GTP_EFTU_D2"/>
    <property type="match status" value="1"/>
</dbReference>
<dbReference type="Pfam" id="PF11987">
    <property type="entry name" value="IF-2"/>
    <property type="match status" value="1"/>
</dbReference>
<dbReference type="Pfam" id="PF08364">
    <property type="entry name" value="IF2_assoc"/>
    <property type="match status" value="1"/>
</dbReference>
<dbReference type="Pfam" id="PF04760">
    <property type="entry name" value="IF2_N"/>
    <property type="match status" value="2"/>
</dbReference>
<dbReference type="SUPFAM" id="SSF52156">
    <property type="entry name" value="Initiation factor IF2/eIF5b, domain 3"/>
    <property type="match status" value="1"/>
</dbReference>
<dbReference type="SUPFAM" id="SSF52540">
    <property type="entry name" value="P-loop containing nucleoside triphosphate hydrolases"/>
    <property type="match status" value="1"/>
</dbReference>
<dbReference type="SUPFAM" id="SSF46955">
    <property type="entry name" value="Putative DNA-binding domain"/>
    <property type="match status" value="1"/>
</dbReference>
<dbReference type="SUPFAM" id="SSF50447">
    <property type="entry name" value="Translation proteins"/>
    <property type="match status" value="2"/>
</dbReference>
<dbReference type="PROSITE" id="PS51722">
    <property type="entry name" value="G_TR_2"/>
    <property type="match status" value="1"/>
</dbReference>
<dbReference type="PROSITE" id="PS01176">
    <property type="entry name" value="IF2"/>
    <property type="match status" value="1"/>
</dbReference>
<reference key="1">
    <citation type="submission" date="2007-10" db="EMBL/GenBank/DDBJ databases">
        <title>Complete sequence of chromosome 1 of Burkholderia multivorans ATCC 17616.</title>
        <authorList>
            <person name="Copeland A."/>
            <person name="Lucas S."/>
            <person name="Lapidus A."/>
            <person name="Barry K."/>
            <person name="Glavina del Rio T."/>
            <person name="Dalin E."/>
            <person name="Tice H."/>
            <person name="Pitluck S."/>
            <person name="Chain P."/>
            <person name="Malfatti S."/>
            <person name="Shin M."/>
            <person name="Vergez L."/>
            <person name="Schmutz J."/>
            <person name="Larimer F."/>
            <person name="Land M."/>
            <person name="Hauser L."/>
            <person name="Kyrpides N."/>
            <person name="Kim E."/>
            <person name="Tiedje J."/>
            <person name="Richardson P."/>
        </authorList>
    </citation>
    <scope>NUCLEOTIDE SEQUENCE [LARGE SCALE GENOMIC DNA]</scope>
    <source>
        <strain>ATCC 17616 / 249</strain>
    </source>
</reference>
<reference key="2">
    <citation type="submission" date="2007-04" db="EMBL/GenBank/DDBJ databases">
        <title>Complete genome sequence of Burkholderia multivorans ATCC 17616.</title>
        <authorList>
            <person name="Ohtsubo Y."/>
            <person name="Yamashita A."/>
            <person name="Kurokawa K."/>
            <person name="Takami H."/>
            <person name="Yuhara S."/>
            <person name="Nishiyama E."/>
            <person name="Endo R."/>
            <person name="Miyazaki R."/>
            <person name="Ono A."/>
            <person name="Yano K."/>
            <person name="Ito M."/>
            <person name="Sota M."/>
            <person name="Yuji N."/>
            <person name="Hattori M."/>
            <person name="Tsuda M."/>
        </authorList>
    </citation>
    <scope>NUCLEOTIDE SEQUENCE [LARGE SCALE GENOMIC DNA]</scope>
    <source>
        <strain>ATCC 17616 / 249</strain>
    </source>
</reference>